<organism>
    <name type="scientific">Rattus norvegicus</name>
    <name type="common">Rat</name>
    <dbReference type="NCBI Taxonomy" id="10116"/>
    <lineage>
        <taxon>Eukaryota</taxon>
        <taxon>Metazoa</taxon>
        <taxon>Chordata</taxon>
        <taxon>Craniata</taxon>
        <taxon>Vertebrata</taxon>
        <taxon>Euteleostomi</taxon>
        <taxon>Mammalia</taxon>
        <taxon>Eutheria</taxon>
        <taxon>Euarchontoglires</taxon>
        <taxon>Glires</taxon>
        <taxon>Rodentia</taxon>
        <taxon>Myomorpha</taxon>
        <taxon>Muroidea</taxon>
        <taxon>Muridae</taxon>
        <taxon>Murinae</taxon>
        <taxon>Rattus</taxon>
    </lineage>
</organism>
<gene>
    <name evidence="9 10" type="primary">Mccc1</name>
    <name evidence="2" type="synonym">Mcca</name>
</gene>
<accession>Q5I0C3</accession>
<reference evidence="9" key="1">
    <citation type="journal article" date="2004" name="Genome Res.">
        <title>The status, quality, and expansion of the NIH full-length cDNA project: the Mammalian Gene Collection (MGC).</title>
        <authorList>
            <consortium name="The MGC Project Team"/>
        </authorList>
    </citation>
    <scope>NUCLEOTIDE SEQUENCE [LARGE SCALE MRNA]</scope>
    <source>
        <strain evidence="7">Brown Norway</strain>
        <tissue evidence="9">Kidney</tissue>
    </source>
</reference>
<reference evidence="8" key="2">
    <citation type="submission" date="2009-01" db="UniProtKB">
        <authorList>
            <person name="Maurya D.K."/>
            <person name="Bhargava P."/>
        </authorList>
    </citation>
    <scope>IDENTIFICATION BY MASS SPECTROMETRY</scope>
</reference>
<feature type="transit peptide" description="Mitochondrion" evidence="2">
    <location>
        <begin position="1"/>
        <end position="38"/>
    </location>
</feature>
<feature type="chain" id="PRO_0000365095" description="Methylcrotonoyl-CoA carboxylase subunit alpha, mitochondrial">
    <location>
        <begin position="39"/>
        <end position="715"/>
    </location>
</feature>
<feature type="domain" description="Biotin carboxylation" evidence="4">
    <location>
        <begin position="45"/>
        <end position="490"/>
    </location>
</feature>
<feature type="domain" description="ATP-grasp" evidence="5">
    <location>
        <begin position="163"/>
        <end position="360"/>
    </location>
</feature>
<feature type="domain" description="Biotinyl-binding" evidence="6">
    <location>
        <begin position="622"/>
        <end position="711"/>
    </location>
</feature>
<feature type="active site" evidence="1">
    <location>
        <position position="335"/>
    </location>
</feature>
<feature type="binding site" evidence="1">
    <location>
        <position position="159"/>
    </location>
    <ligand>
        <name>ATP</name>
        <dbReference type="ChEBI" id="CHEBI:30616"/>
    </ligand>
</feature>
<feature type="binding site" evidence="1">
    <location>
        <position position="201"/>
    </location>
    <ligand>
        <name>ATP</name>
        <dbReference type="ChEBI" id="CHEBI:30616"/>
    </ligand>
</feature>
<feature type="binding site" evidence="1">
    <location>
        <begin position="207"/>
        <end position="208"/>
    </location>
    <ligand>
        <name>ATP</name>
        <dbReference type="ChEBI" id="CHEBI:30616"/>
    </ligand>
</feature>
<feature type="binding site" evidence="1">
    <location>
        <position position="251"/>
    </location>
    <ligand>
        <name>ATP</name>
        <dbReference type="ChEBI" id="CHEBI:30616"/>
    </ligand>
</feature>
<feature type="binding site" evidence="1">
    <location>
        <position position="278"/>
    </location>
    <ligand>
        <name>ATP</name>
        <dbReference type="ChEBI" id="CHEBI:30616"/>
    </ligand>
</feature>
<feature type="binding site" evidence="1">
    <location>
        <position position="318"/>
    </location>
    <ligand>
        <name>ATP</name>
        <dbReference type="ChEBI" id="CHEBI:30616"/>
    </ligand>
</feature>
<feature type="modified residue" description="N6-acetyllysine" evidence="3">
    <location>
        <position position="193"/>
    </location>
</feature>
<feature type="modified residue" description="N6-acetyllysine" evidence="3">
    <location>
        <position position="233"/>
    </location>
</feature>
<feature type="modified residue" description="N6-acetyllysine" evidence="3">
    <location>
        <position position="490"/>
    </location>
</feature>
<feature type="modified residue" description="N6-acetyllysine; alternate" evidence="3">
    <location>
        <position position="577"/>
    </location>
</feature>
<feature type="modified residue" description="N6-succinyllysine; alternate" evidence="3">
    <location>
        <position position="577"/>
    </location>
</feature>
<feature type="modified residue" description="N6-biotinyllysine" evidence="6">
    <location>
        <position position="677"/>
    </location>
</feature>
<comment type="function">
    <text evidence="2">Biotin-attachment subunit of the 3-methylcrotonyl-CoA carboxylase, an enzyme that catalyzes the conversion of 3-methylcrotonyl-CoA to 3-methylglutaconyl-CoA, a critical step for leucine and isovaleric acid catabolism.</text>
</comment>
<comment type="catalytic activity">
    <reaction evidence="2">
        <text>3-methylbut-2-enoyl-CoA + hydrogencarbonate + ATP = 3-methyl-(2E)-glutaconyl-CoA + ADP + phosphate + H(+)</text>
        <dbReference type="Rhea" id="RHEA:13589"/>
        <dbReference type="ChEBI" id="CHEBI:15378"/>
        <dbReference type="ChEBI" id="CHEBI:17544"/>
        <dbReference type="ChEBI" id="CHEBI:30616"/>
        <dbReference type="ChEBI" id="CHEBI:43474"/>
        <dbReference type="ChEBI" id="CHEBI:57344"/>
        <dbReference type="ChEBI" id="CHEBI:57346"/>
        <dbReference type="ChEBI" id="CHEBI:456216"/>
        <dbReference type="EC" id="6.4.1.4"/>
    </reaction>
</comment>
<comment type="cofactor">
    <cofactor evidence="6">
        <name>biotin</name>
        <dbReference type="ChEBI" id="CHEBI:57586"/>
    </cofactor>
</comment>
<comment type="pathway">
    <text>Amino-acid degradation; L-leucine degradation; (S)-3-hydroxy-3-methylglutaryl-CoA from 3-isovaleryl-CoA: step 2/3.</text>
</comment>
<comment type="subunit">
    <text evidence="2 3">Probably a dodecamer composed of six biotin-containing alpha subunits (MCCC1) and six beta (MCCC2) subunits. Interacts (via the biotin carboxylation domain) with SIRT4 (By similarity).</text>
</comment>
<comment type="subcellular location">
    <subcellularLocation>
        <location evidence="2">Mitochondrion matrix</location>
    </subcellularLocation>
</comment>
<comment type="PTM">
    <text evidence="3">Acetylated.</text>
</comment>
<evidence type="ECO:0000250" key="1">
    <source>
        <dbReference type="UniProtKB" id="P24182"/>
    </source>
</evidence>
<evidence type="ECO:0000250" key="2">
    <source>
        <dbReference type="UniProtKB" id="Q96RQ3"/>
    </source>
</evidence>
<evidence type="ECO:0000250" key="3">
    <source>
        <dbReference type="UniProtKB" id="Q99MR8"/>
    </source>
</evidence>
<evidence type="ECO:0000255" key="4"/>
<evidence type="ECO:0000255" key="5">
    <source>
        <dbReference type="PROSITE-ProRule" id="PRU00409"/>
    </source>
</evidence>
<evidence type="ECO:0000255" key="6">
    <source>
        <dbReference type="PROSITE-ProRule" id="PRU01066"/>
    </source>
</evidence>
<evidence type="ECO:0000269" key="7">
    <source>
    </source>
</evidence>
<evidence type="ECO:0000305" key="8"/>
<evidence type="ECO:0000312" key="9">
    <source>
        <dbReference type="EMBL" id="AAH88473.1"/>
    </source>
</evidence>
<evidence type="ECO:0000312" key="10">
    <source>
        <dbReference type="RGD" id="1310615"/>
    </source>
</evidence>
<protein>
    <recommendedName>
        <fullName evidence="2">Methylcrotonoyl-CoA carboxylase subunit alpha, mitochondrial</fullName>
        <shortName evidence="2">MCCase subunit alpha</shortName>
        <ecNumber evidence="2">6.4.1.4</ecNumber>
    </recommendedName>
    <alternativeName>
        <fullName evidence="2">3-methylcrotonyl-CoA carboxylase 1</fullName>
    </alternativeName>
    <alternativeName>
        <fullName evidence="2">3-methylcrotonyl-CoA carboxylase biotin-containing subunit</fullName>
    </alternativeName>
    <alternativeName>
        <fullName evidence="2">3-methylcrotonyl-CoA:carbon dioxide ligase subunit alpha</fullName>
    </alternativeName>
</protein>
<keyword id="KW-0007">Acetylation</keyword>
<keyword id="KW-0067">ATP-binding</keyword>
<keyword id="KW-0092">Biotin</keyword>
<keyword id="KW-0436">Ligase</keyword>
<keyword id="KW-0496">Mitochondrion</keyword>
<keyword id="KW-0547">Nucleotide-binding</keyword>
<keyword id="KW-1185">Reference proteome</keyword>
<keyword id="KW-0809">Transit peptide</keyword>
<name>MCCA_RAT</name>
<sequence length="715" mass="79330">MAAAALLAAVDRNQLRRVPILLLQPREWPWKHRTVKYGTTPGGSITKVLIANRGEIACRVIRTARKMGVQSVAVYSEADRNSMHVDMADEAYSIGPAPSQQSYLAMEKIIQVAKSSAAQAIHPGYGFLSENMEFAEFCKQEGIIFIGPPSTAIRDMGIKSTSKSIMAAAGVPVVEGYHGNDQSDECLKEHAGKIGYPVMIKAIRGGGGKGMRIIRSEKEFQEQLESARREAKKSFNDDAMLIEKFVDTPRHVEVQVFGDHHGNAVYLFERDCSVQRRHQKIIEEAPAPGIDPEVRRRLGEAAVRAAKAVNYVGAGTVEFIMDSKHNFYFMEMNTRLQVEHPVTEMITGTDLVEWQLRIAAGEKIPLSQEEIPLQGHAFEARIYAEDPDNNFMPGAGPLVHLSTPPPDMSTRIETGVRQGDEVSVHYDPMIAKLVVWASDRQSALSKLRYSLHQYNIVGLRTNVDFLLRLSGHSEFEAGNVHTDFIPQHHKDLLPTHSTIAKESVCQAALGLILKEKEMTSAFKLHTQDQFSPFSFSSGRRLNISYTRNMTLRSGKNDIIIAVTYNRDGSYDMQIENKLFRVLGDLSNEDGYTYLKSSVNGVASKSKFILLDNTIYLFSMEGSIEVGIPVPKYLSPVSAEGTQGGTIAPMTGTIEKVFVKAGDRVKAGDALMVMIAMKMEHTIKAPKDGRIKKVFFSEGAQANRHAPLVEFEEEEV</sequence>
<proteinExistence type="evidence at protein level"/>
<dbReference type="EC" id="6.4.1.4" evidence="2"/>
<dbReference type="EMBL" id="BC088473">
    <property type="protein sequence ID" value="AAH88473.1"/>
    <property type="molecule type" value="mRNA"/>
</dbReference>
<dbReference type="RefSeq" id="NP_001009653.1">
    <property type="nucleotide sequence ID" value="NM_001009653.1"/>
</dbReference>
<dbReference type="SMR" id="Q5I0C3"/>
<dbReference type="BioGRID" id="254844">
    <property type="interactions" value="1"/>
</dbReference>
<dbReference type="FunCoup" id="Q5I0C3">
    <property type="interactions" value="2540"/>
</dbReference>
<dbReference type="STRING" id="10116.ENSRNOP00000018942"/>
<dbReference type="GlyGen" id="Q5I0C3">
    <property type="glycosylation" value="1 site, 1 O-linked glycan (1 site)"/>
</dbReference>
<dbReference type="iPTMnet" id="Q5I0C3"/>
<dbReference type="PhosphoSitePlus" id="Q5I0C3"/>
<dbReference type="jPOST" id="Q5I0C3"/>
<dbReference type="PaxDb" id="10116-ENSRNOP00000018942"/>
<dbReference type="GeneID" id="294972"/>
<dbReference type="KEGG" id="rno:294972"/>
<dbReference type="UCSC" id="RGD:1310615">
    <property type="organism name" value="rat"/>
</dbReference>
<dbReference type="AGR" id="RGD:1310615"/>
<dbReference type="CTD" id="56922"/>
<dbReference type="RGD" id="1310615">
    <property type="gene designation" value="Mccc1"/>
</dbReference>
<dbReference type="eggNOG" id="KOG0238">
    <property type="taxonomic scope" value="Eukaryota"/>
</dbReference>
<dbReference type="InParanoid" id="Q5I0C3"/>
<dbReference type="OrthoDB" id="54542at9989"/>
<dbReference type="PhylomeDB" id="Q5I0C3"/>
<dbReference type="BRENDA" id="6.4.1.4">
    <property type="organism ID" value="5301"/>
</dbReference>
<dbReference type="Reactome" id="R-RNO-196780">
    <property type="pathway name" value="Biotin transport and metabolism"/>
</dbReference>
<dbReference type="Reactome" id="R-RNO-70895">
    <property type="pathway name" value="Branched-chain amino acid catabolism"/>
</dbReference>
<dbReference type="UniPathway" id="UPA00363">
    <property type="reaction ID" value="UER00861"/>
</dbReference>
<dbReference type="PRO" id="PR:Q5I0C3"/>
<dbReference type="Proteomes" id="UP000002494">
    <property type="component" value="Unplaced"/>
</dbReference>
<dbReference type="GO" id="GO:1905202">
    <property type="term" value="C:methylcrotonoyl-CoA carboxylase complex"/>
    <property type="evidence" value="ECO:0000250"/>
    <property type="project" value="UniProtKB"/>
</dbReference>
<dbReference type="GO" id="GO:0005759">
    <property type="term" value="C:mitochondrial matrix"/>
    <property type="evidence" value="ECO:0000266"/>
    <property type="project" value="RGD"/>
</dbReference>
<dbReference type="GO" id="GO:0005739">
    <property type="term" value="C:mitochondrion"/>
    <property type="evidence" value="ECO:0000318"/>
    <property type="project" value="GO_Central"/>
</dbReference>
<dbReference type="GO" id="GO:0005524">
    <property type="term" value="F:ATP binding"/>
    <property type="evidence" value="ECO:0007669"/>
    <property type="project" value="UniProtKB-KW"/>
</dbReference>
<dbReference type="GO" id="GO:0046872">
    <property type="term" value="F:metal ion binding"/>
    <property type="evidence" value="ECO:0007669"/>
    <property type="project" value="InterPro"/>
</dbReference>
<dbReference type="GO" id="GO:0004485">
    <property type="term" value="F:methylcrotonoyl-CoA carboxylase activity"/>
    <property type="evidence" value="ECO:0007669"/>
    <property type="project" value="UniProtKB-EC"/>
</dbReference>
<dbReference type="GO" id="GO:0006552">
    <property type="term" value="P:L-leucine catabolic process"/>
    <property type="evidence" value="ECO:0007669"/>
    <property type="project" value="UniProtKB-UniPathway"/>
</dbReference>
<dbReference type="CDD" id="cd06850">
    <property type="entry name" value="biotinyl_domain"/>
    <property type="match status" value="1"/>
</dbReference>
<dbReference type="FunFam" id="2.40.50.100:FF:000003">
    <property type="entry name" value="Acetyl-CoA carboxylase biotin carboxyl carrier protein"/>
    <property type="match status" value="1"/>
</dbReference>
<dbReference type="FunFam" id="3.30.1490.20:FF:000003">
    <property type="entry name" value="acetyl-CoA carboxylase isoform X1"/>
    <property type="match status" value="1"/>
</dbReference>
<dbReference type="FunFam" id="3.30.470.20:FF:000028">
    <property type="entry name" value="Methylcrotonoyl-CoA carboxylase subunit alpha, mitochondrial"/>
    <property type="match status" value="1"/>
</dbReference>
<dbReference type="FunFam" id="3.40.50.20:FF:000010">
    <property type="entry name" value="Propionyl-CoA carboxylase subunit alpha"/>
    <property type="match status" value="1"/>
</dbReference>
<dbReference type="Gene3D" id="2.40.50.100">
    <property type="match status" value="1"/>
</dbReference>
<dbReference type="Gene3D" id="3.30.700.40">
    <property type="match status" value="1"/>
</dbReference>
<dbReference type="Gene3D" id="3.30.470.20">
    <property type="entry name" value="ATP-grasp fold, B domain"/>
    <property type="match status" value="1"/>
</dbReference>
<dbReference type="InterPro" id="IPR011761">
    <property type="entry name" value="ATP-grasp"/>
</dbReference>
<dbReference type="InterPro" id="IPR005481">
    <property type="entry name" value="BC-like_N"/>
</dbReference>
<dbReference type="InterPro" id="IPR001882">
    <property type="entry name" value="Biotin_BS"/>
</dbReference>
<dbReference type="InterPro" id="IPR050856">
    <property type="entry name" value="Biotin_carboxylase_complex"/>
</dbReference>
<dbReference type="InterPro" id="IPR011764">
    <property type="entry name" value="Biotin_carboxylation_dom"/>
</dbReference>
<dbReference type="InterPro" id="IPR005482">
    <property type="entry name" value="Biotin_COase_C"/>
</dbReference>
<dbReference type="InterPro" id="IPR000089">
    <property type="entry name" value="Biotin_lipoyl"/>
</dbReference>
<dbReference type="InterPro" id="IPR005479">
    <property type="entry name" value="CbamoylP_synth_lsu-like_ATP-bd"/>
</dbReference>
<dbReference type="InterPro" id="IPR016185">
    <property type="entry name" value="PreATP-grasp_dom_sf"/>
</dbReference>
<dbReference type="InterPro" id="IPR011054">
    <property type="entry name" value="Rudment_hybrid_motif"/>
</dbReference>
<dbReference type="InterPro" id="IPR011053">
    <property type="entry name" value="Single_hybrid_motif"/>
</dbReference>
<dbReference type="NCBIfam" id="NF006367">
    <property type="entry name" value="PRK08591.1"/>
    <property type="match status" value="1"/>
</dbReference>
<dbReference type="PANTHER" id="PTHR18866">
    <property type="entry name" value="CARBOXYLASE:PYRUVATE/ACETYL-COA/PROPIONYL-COA CARBOXYLASE"/>
    <property type="match status" value="1"/>
</dbReference>
<dbReference type="PANTHER" id="PTHR18866:SF33">
    <property type="entry name" value="METHYLCROTONOYL-COA CARBOXYLASE SUBUNIT ALPHA, MITOCHONDRIAL-RELATED"/>
    <property type="match status" value="1"/>
</dbReference>
<dbReference type="Pfam" id="PF02785">
    <property type="entry name" value="Biotin_carb_C"/>
    <property type="match status" value="1"/>
</dbReference>
<dbReference type="Pfam" id="PF00289">
    <property type="entry name" value="Biotin_carb_N"/>
    <property type="match status" value="1"/>
</dbReference>
<dbReference type="Pfam" id="PF00364">
    <property type="entry name" value="Biotin_lipoyl"/>
    <property type="match status" value="1"/>
</dbReference>
<dbReference type="Pfam" id="PF02786">
    <property type="entry name" value="CPSase_L_D2"/>
    <property type="match status" value="1"/>
</dbReference>
<dbReference type="SMART" id="SM00878">
    <property type="entry name" value="Biotin_carb_C"/>
    <property type="match status" value="1"/>
</dbReference>
<dbReference type="SUPFAM" id="SSF56059">
    <property type="entry name" value="Glutathione synthetase ATP-binding domain-like"/>
    <property type="match status" value="1"/>
</dbReference>
<dbReference type="SUPFAM" id="SSF52440">
    <property type="entry name" value="PreATP-grasp domain"/>
    <property type="match status" value="1"/>
</dbReference>
<dbReference type="SUPFAM" id="SSF51246">
    <property type="entry name" value="Rudiment single hybrid motif"/>
    <property type="match status" value="1"/>
</dbReference>
<dbReference type="SUPFAM" id="SSF51230">
    <property type="entry name" value="Single hybrid motif"/>
    <property type="match status" value="1"/>
</dbReference>
<dbReference type="PROSITE" id="PS50975">
    <property type="entry name" value="ATP_GRASP"/>
    <property type="match status" value="1"/>
</dbReference>
<dbReference type="PROSITE" id="PS50979">
    <property type="entry name" value="BC"/>
    <property type="match status" value="1"/>
</dbReference>
<dbReference type="PROSITE" id="PS00188">
    <property type="entry name" value="BIOTIN"/>
    <property type="match status" value="1"/>
</dbReference>
<dbReference type="PROSITE" id="PS50968">
    <property type="entry name" value="BIOTINYL_LIPOYL"/>
    <property type="match status" value="1"/>
</dbReference>
<dbReference type="PROSITE" id="PS00867">
    <property type="entry name" value="CPSASE_2"/>
    <property type="match status" value="1"/>
</dbReference>